<name>NUD22_HUMAN</name>
<accession>Q9BRQ3</accession>
<accession>C9JY06</accession>
<accession>Q71RD5</accession>
<dbReference type="EC" id="3.6.1.45"/>
<dbReference type="EMBL" id="AF370402">
    <property type="protein sequence ID" value="AAQ15238.1"/>
    <property type="molecule type" value="mRNA"/>
</dbReference>
<dbReference type="EMBL" id="AP001453">
    <property type="status" value="NOT_ANNOTATED_CDS"/>
    <property type="molecule type" value="Genomic_DNA"/>
</dbReference>
<dbReference type="EMBL" id="AP006334">
    <property type="status" value="NOT_ANNOTATED_CDS"/>
    <property type="molecule type" value="Genomic_DNA"/>
</dbReference>
<dbReference type="EMBL" id="BC006129">
    <property type="protein sequence ID" value="AAH06129.1"/>
    <property type="molecule type" value="mRNA"/>
</dbReference>
<dbReference type="CCDS" id="CCDS44640.1">
    <molecule id="Q9BRQ3-3"/>
</dbReference>
<dbReference type="CCDS" id="CCDS8061.1">
    <molecule id="Q9BRQ3-1"/>
</dbReference>
<dbReference type="RefSeq" id="NP_001122084.2">
    <molecule id="Q9BRQ3-1"/>
    <property type="nucleotide sequence ID" value="NM_001128612.3"/>
</dbReference>
<dbReference type="RefSeq" id="NP_001122085.2">
    <molecule id="Q9BRQ3-3"/>
    <property type="nucleotide sequence ID" value="NM_001128613.3"/>
</dbReference>
<dbReference type="RefSeq" id="NP_001258760.2">
    <molecule id="Q9BRQ3-3"/>
    <property type="nucleotide sequence ID" value="NM_001271831.2"/>
</dbReference>
<dbReference type="RefSeq" id="NP_115720.2">
    <molecule id="Q9BRQ3-1"/>
    <property type="nucleotide sequence ID" value="NM_032344.4"/>
</dbReference>
<dbReference type="RefSeq" id="XP_047283659.1">
    <molecule id="Q9BRQ3-1"/>
    <property type="nucleotide sequence ID" value="XM_047427703.1"/>
</dbReference>
<dbReference type="RefSeq" id="XP_047283661.1">
    <molecule id="Q9BRQ3-3"/>
    <property type="nucleotide sequence ID" value="XM_047427705.1"/>
</dbReference>
<dbReference type="PDB" id="5LF9">
    <property type="method" value="X-ray"/>
    <property type="resolution" value="1.45 A"/>
    <property type="chains" value="A=1-303"/>
</dbReference>
<dbReference type="PDB" id="5LOR">
    <property type="method" value="X-ray"/>
    <property type="resolution" value="2.19 A"/>
    <property type="chains" value="A/B=1-303"/>
</dbReference>
<dbReference type="PDB" id="5LOU">
    <property type="method" value="X-ray"/>
    <property type="resolution" value="1.80 A"/>
    <property type="chains" value="A/B=1-303"/>
</dbReference>
<dbReference type="PDB" id="5R50">
    <property type="method" value="X-ray"/>
    <property type="resolution" value="1.87 A"/>
    <property type="chains" value="A=1-303"/>
</dbReference>
<dbReference type="PDB" id="5R51">
    <property type="method" value="X-ray"/>
    <property type="resolution" value="1.65 A"/>
    <property type="chains" value="A=1-303"/>
</dbReference>
<dbReference type="PDB" id="5R52">
    <property type="method" value="X-ray"/>
    <property type="resolution" value="1.48 A"/>
    <property type="chains" value="A=1-303"/>
</dbReference>
<dbReference type="PDB" id="5R53">
    <property type="method" value="X-ray"/>
    <property type="resolution" value="1.40 A"/>
    <property type="chains" value="A=1-303"/>
</dbReference>
<dbReference type="PDB" id="5R54">
    <property type="method" value="X-ray"/>
    <property type="resolution" value="1.79 A"/>
    <property type="chains" value="A=1-303"/>
</dbReference>
<dbReference type="PDB" id="5R55">
    <property type="method" value="X-ray"/>
    <property type="resolution" value="1.48 A"/>
    <property type="chains" value="A=1-303"/>
</dbReference>
<dbReference type="PDB" id="5R56">
    <property type="method" value="X-ray"/>
    <property type="resolution" value="1.51 A"/>
    <property type="chains" value="A=1-303"/>
</dbReference>
<dbReference type="PDB" id="5R57">
    <property type="method" value="X-ray"/>
    <property type="resolution" value="1.44 A"/>
    <property type="chains" value="A=1-303"/>
</dbReference>
<dbReference type="PDB" id="5R58">
    <property type="method" value="X-ray"/>
    <property type="resolution" value="1.98 A"/>
    <property type="chains" value="A=1-303"/>
</dbReference>
<dbReference type="PDB" id="5R59">
    <property type="method" value="X-ray"/>
    <property type="resolution" value="2.11 A"/>
    <property type="chains" value="A=1-303"/>
</dbReference>
<dbReference type="PDB" id="5R5A">
    <property type="method" value="X-ray"/>
    <property type="resolution" value="1.44 A"/>
    <property type="chains" value="A=1-303"/>
</dbReference>
<dbReference type="PDB" id="5R5B">
    <property type="method" value="X-ray"/>
    <property type="resolution" value="1.53 A"/>
    <property type="chains" value="A=1-303"/>
</dbReference>
<dbReference type="PDB" id="5R5C">
    <property type="method" value="X-ray"/>
    <property type="resolution" value="1.68 A"/>
    <property type="chains" value="A=1-303"/>
</dbReference>
<dbReference type="PDB" id="5R5D">
    <property type="method" value="X-ray"/>
    <property type="resolution" value="1.65 A"/>
    <property type="chains" value="A=1-303"/>
</dbReference>
<dbReference type="PDB" id="5R5E">
    <property type="method" value="X-ray"/>
    <property type="resolution" value="1.58 A"/>
    <property type="chains" value="A=1-303"/>
</dbReference>
<dbReference type="PDB" id="5R5F">
    <property type="method" value="X-ray"/>
    <property type="resolution" value="1.63 A"/>
    <property type="chains" value="A=1-303"/>
</dbReference>
<dbReference type="PDB" id="5R5G">
    <property type="method" value="X-ray"/>
    <property type="resolution" value="1.77 A"/>
    <property type="chains" value="A=1-303"/>
</dbReference>
<dbReference type="PDB" id="5R5H">
    <property type="method" value="X-ray"/>
    <property type="resolution" value="1.79 A"/>
    <property type="chains" value="A=1-303"/>
</dbReference>
<dbReference type="PDB" id="5R5I">
    <property type="method" value="X-ray"/>
    <property type="resolution" value="1.70 A"/>
    <property type="chains" value="A=1-303"/>
</dbReference>
<dbReference type="PDB" id="5R5J">
    <property type="method" value="X-ray"/>
    <property type="resolution" value="1.98 A"/>
    <property type="chains" value="A=1-303"/>
</dbReference>
<dbReference type="PDB" id="5R5K">
    <property type="method" value="X-ray"/>
    <property type="resolution" value="1.60 A"/>
    <property type="chains" value="A=1-303"/>
</dbReference>
<dbReference type="PDB" id="5R5L">
    <property type="method" value="X-ray"/>
    <property type="resolution" value="1.63 A"/>
    <property type="chains" value="A=1-303"/>
</dbReference>
<dbReference type="PDB" id="5R5M">
    <property type="method" value="X-ray"/>
    <property type="resolution" value="1.60 A"/>
    <property type="chains" value="A=1-303"/>
</dbReference>
<dbReference type="PDB" id="5R5N">
    <property type="method" value="X-ray"/>
    <property type="resolution" value="1.87 A"/>
    <property type="chains" value="A=1-303"/>
</dbReference>
<dbReference type="PDB" id="5R5O">
    <property type="method" value="X-ray"/>
    <property type="resolution" value="1.79 A"/>
    <property type="chains" value="A=1-303"/>
</dbReference>
<dbReference type="PDB" id="5R5P">
    <property type="method" value="X-ray"/>
    <property type="resolution" value="1.53 A"/>
    <property type="chains" value="A=1-303"/>
</dbReference>
<dbReference type="PDB" id="5R5Q">
    <property type="method" value="X-ray"/>
    <property type="resolution" value="1.71 A"/>
    <property type="chains" value="A=1-303"/>
</dbReference>
<dbReference type="PDB" id="5R5R">
    <property type="method" value="X-ray"/>
    <property type="resolution" value="1.65 A"/>
    <property type="chains" value="A=1-303"/>
</dbReference>
<dbReference type="PDB" id="5R5S">
    <property type="method" value="X-ray"/>
    <property type="resolution" value="1.50 A"/>
    <property type="chains" value="A=1-303"/>
</dbReference>
<dbReference type="PDB" id="5RKZ">
    <property type="method" value="X-ray"/>
    <property type="resolution" value="1.38 A"/>
    <property type="chains" value="A=1-303"/>
</dbReference>
<dbReference type="PDBsum" id="5LF9"/>
<dbReference type="PDBsum" id="5LOR"/>
<dbReference type="PDBsum" id="5LOU"/>
<dbReference type="PDBsum" id="5R50"/>
<dbReference type="PDBsum" id="5R51"/>
<dbReference type="PDBsum" id="5R52"/>
<dbReference type="PDBsum" id="5R53"/>
<dbReference type="PDBsum" id="5R54"/>
<dbReference type="PDBsum" id="5R55"/>
<dbReference type="PDBsum" id="5R56"/>
<dbReference type="PDBsum" id="5R57"/>
<dbReference type="PDBsum" id="5R58"/>
<dbReference type="PDBsum" id="5R59"/>
<dbReference type="PDBsum" id="5R5A"/>
<dbReference type="PDBsum" id="5R5B"/>
<dbReference type="PDBsum" id="5R5C"/>
<dbReference type="PDBsum" id="5R5D"/>
<dbReference type="PDBsum" id="5R5E"/>
<dbReference type="PDBsum" id="5R5F"/>
<dbReference type="PDBsum" id="5R5G"/>
<dbReference type="PDBsum" id="5R5H"/>
<dbReference type="PDBsum" id="5R5I"/>
<dbReference type="PDBsum" id="5R5J"/>
<dbReference type="PDBsum" id="5R5K"/>
<dbReference type="PDBsum" id="5R5L"/>
<dbReference type="PDBsum" id="5R5M"/>
<dbReference type="PDBsum" id="5R5N"/>
<dbReference type="PDBsum" id="5R5O"/>
<dbReference type="PDBsum" id="5R5P"/>
<dbReference type="PDBsum" id="5R5Q"/>
<dbReference type="PDBsum" id="5R5R"/>
<dbReference type="PDBsum" id="5R5S"/>
<dbReference type="PDBsum" id="5RKZ"/>
<dbReference type="SMR" id="Q9BRQ3"/>
<dbReference type="BioGRID" id="124030">
    <property type="interactions" value="25"/>
</dbReference>
<dbReference type="FunCoup" id="Q9BRQ3">
    <property type="interactions" value="427"/>
</dbReference>
<dbReference type="IntAct" id="Q9BRQ3">
    <property type="interactions" value="23"/>
</dbReference>
<dbReference type="STRING" id="9606.ENSP00000279206"/>
<dbReference type="iPTMnet" id="Q9BRQ3"/>
<dbReference type="PhosphoSitePlus" id="Q9BRQ3"/>
<dbReference type="BioMuta" id="NUDT22"/>
<dbReference type="DMDM" id="317373407"/>
<dbReference type="jPOST" id="Q9BRQ3"/>
<dbReference type="MassIVE" id="Q9BRQ3"/>
<dbReference type="PaxDb" id="9606-ENSP00000279206"/>
<dbReference type="PeptideAtlas" id="Q9BRQ3"/>
<dbReference type="ProteomicsDB" id="12190"/>
<dbReference type="ProteomicsDB" id="78802">
    <molecule id="Q9BRQ3-1"/>
</dbReference>
<dbReference type="ProteomicsDB" id="78803">
    <molecule id="Q9BRQ3-2"/>
</dbReference>
<dbReference type="Pumba" id="Q9BRQ3"/>
<dbReference type="Antibodypedia" id="51889">
    <property type="antibodies" value="87 antibodies from 18 providers"/>
</dbReference>
<dbReference type="DNASU" id="84304"/>
<dbReference type="Ensembl" id="ENST00000279206.8">
    <molecule id="Q9BRQ3-1"/>
    <property type="protein sequence ID" value="ENSP00000279206.3"/>
    <property type="gene ID" value="ENSG00000149761.9"/>
</dbReference>
<dbReference type="Ensembl" id="ENST00000441250.6">
    <molecule id="Q9BRQ3-3"/>
    <property type="protein sequence ID" value="ENSP00000407970.2"/>
    <property type="gene ID" value="ENSG00000149761.9"/>
</dbReference>
<dbReference type="GeneID" id="84304"/>
<dbReference type="KEGG" id="hsa:84304"/>
<dbReference type="MANE-Select" id="ENST00000279206.8">
    <property type="protein sequence ID" value="ENSP00000279206.3"/>
    <property type="RefSeq nucleotide sequence ID" value="NM_032344.4"/>
    <property type="RefSeq protein sequence ID" value="NP_115720.2"/>
</dbReference>
<dbReference type="UCSC" id="uc001nyp.6">
    <molecule id="Q9BRQ3-1"/>
    <property type="organism name" value="human"/>
</dbReference>
<dbReference type="AGR" id="HGNC:28189"/>
<dbReference type="CTD" id="84304"/>
<dbReference type="GeneCards" id="NUDT22"/>
<dbReference type="HGNC" id="HGNC:28189">
    <property type="gene designation" value="NUDT22"/>
</dbReference>
<dbReference type="HPA" id="ENSG00000149761">
    <property type="expression patterns" value="Low tissue specificity"/>
</dbReference>
<dbReference type="neXtProt" id="NX_Q9BRQ3"/>
<dbReference type="OpenTargets" id="ENSG00000149761"/>
<dbReference type="PharmGKB" id="PA142671240"/>
<dbReference type="VEuPathDB" id="HostDB:ENSG00000149761"/>
<dbReference type="eggNOG" id="ENOG502QRSW">
    <property type="taxonomic scope" value="Eukaryota"/>
</dbReference>
<dbReference type="GeneTree" id="ENSGT00390000017869"/>
<dbReference type="InParanoid" id="Q9BRQ3"/>
<dbReference type="OMA" id="LCTDDGQ"/>
<dbReference type="OrthoDB" id="242473at2759"/>
<dbReference type="PAN-GO" id="Q9BRQ3">
    <property type="GO annotations" value="1 GO annotation based on evolutionary models"/>
</dbReference>
<dbReference type="PhylomeDB" id="Q9BRQ3"/>
<dbReference type="TreeFam" id="TF106357"/>
<dbReference type="PathwayCommons" id="Q9BRQ3"/>
<dbReference type="SignaLink" id="Q9BRQ3"/>
<dbReference type="BioGRID-ORCS" id="84304">
    <property type="hits" value="17 hits in 1154 CRISPR screens"/>
</dbReference>
<dbReference type="ChiTaRS" id="NUDT22">
    <property type="organism name" value="human"/>
</dbReference>
<dbReference type="GenomeRNAi" id="84304"/>
<dbReference type="Pharos" id="Q9BRQ3">
    <property type="development level" value="Tbio"/>
</dbReference>
<dbReference type="PRO" id="PR:Q9BRQ3"/>
<dbReference type="Proteomes" id="UP000005640">
    <property type="component" value="Chromosome 11"/>
</dbReference>
<dbReference type="RNAct" id="Q9BRQ3">
    <property type="molecule type" value="protein"/>
</dbReference>
<dbReference type="Bgee" id="ENSG00000149761">
    <property type="expression patterns" value="Expressed in mucosa of transverse colon and 164 other cell types or tissues"/>
</dbReference>
<dbReference type="ExpressionAtlas" id="Q9BRQ3">
    <property type="expression patterns" value="baseline and differential"/>
</dbReference>
<dbReference type="GO" id="GO:0005654">
    <property type="term" value="C:nucleoplasm"/>
    <property type="evidence" value="ECO:0000314"/>
    <property type="project" value="HPA"/>
</dbReference>
<dbReference type="GO" id="GO:0052751">
    <property type="term" value="F:GDP-mannose hydrolase activity"/>
    <property type="evidence" value="ECO:0000318"/>
    <property type="project" value="GO_Central"/>
</dbReference>
<dbReference type="GO" id="GO:0046872">
    <property type="term" value="F:metal ion binding"/>
    <property type="evidence" value="ECO:0000315"/>
    <property type="project" value="UniProtKB"/>
</dbReference>
<dbReference type="GO" id="GO:0008768">
    <property type="term" value="F:UDP-sugar diphosphatase activity"/>
    <property type="evidence" value="ECO:0000314"/>
    <property type="project" value="UniProtKB"/>
</dbReference>
<dbReference type="InterPro" id="IPR000086">
    <property type="entry name" value="NUDIX_hydrolase_dom"/>
</dbReference>
<dbReference type="InterPro" id="IPR055295">
    <property type="entry name" value="NUDT22/NUDT9-like"/>
</dbReference>
<dbReference type="PANTHER" id="PTHR31835">
    <property type="entry name" value="URIDINE DIPHOSPHATE GLUCOSE PYROPHOSPHATASE"/>
    <property type="match status" value="1"/>
</dbReference>
<dbReference type="PANTHER" id="PTHR31835:SF1">
    <property type="entry name" value="URIDINE DIPHOSPHATE GLUCOSE PYROPHOSPHATASE NUDT22"/>
    <property type="match status" value="1"/>
</dbReference>
<dbReference type="PROSITE" id="PS51462">
    <property type="entry name" value="NUDIX"/>
    <property type="match status" value="1"/>
</dbReference>
<comment type="function">
    <text evidence="4">Hydrolyzes UDP-glucose to glucose 1-phosphate and UMP and UDP-galactose to galactose 1-phosphate and UMP. Preferred substrate is UDP-glucose.</text>
</comment>
<comment type="catalytic activity">
    <reaction evidence="4">
        <text>UDP-sugar + H2O = UMP + alpha-D-aldose 1-phosphate.</text>
        <dbReference type="EC" id="3.6.1.45"/>
    </reaction>
</comment>
<comment type="cofactor">
    <cofactor evidence="4">
        <name>Mg(2+)</name>
        <dbReference type="ChEBI" id="CHEBI:18420"/>
    </cofactor>
</comment>
<comment type="biophysicochemical properties">
    <kinetics>
        <KM evidence="4">16.5 uM for UDP-glucose</KM>
        <KM evidence="4">51.4 uM for UDP-galactose</KM>
        <text evidence="4">kcat is 0.69 sec(-1) for UDP-glucose. kcat is 0.55 sec(-1) for UDP-galactose.</text>
    </kinetics>
</comment>
<comment type="interaction">
    <interactant intactId="EBI-10297093">
        <id>Q9BRQ3</id>
    </interactant>
    <interactant intactId="EBI-948603">
        <id>Q03989</id>
        <label>ARID5A</label>
    </interactant>
    <organismsDiffer>false</organismsDiffer>
    <experiments>3</experiments>
</comment>
<comment type="interaction">
    <interactant intactId="EBI-10297093">
        <id>Q9BRQ3</id>
    </interactant>
    <interactant intactId="EBI-742054">
        <id>Q96D03</id>
        <label>DDIT4L</label>
    </interactant>
    <organismsDiffer>false</organismsDiffer>
    <experiments>3</experiments>
</comment>
<comment type="interaction">
    <interactant intactId="EBI-10297093">
        <id>Q9BRQ3</id>
    </interactant>
    <interactant intactId="EBI-742362">
        <id>O96015</id>
        <label>DNAL4</label>
    </interactant>
    <organismsDiffer>false</organismsDiffer>
    <experiments>7</experiments>
</comment>
<comment type="interaction">
    <interactant intactId="EBI-10297093">
        <id>Q9BRQ3</id>
    </interactant>
    <interactant intactId="EBI-6509505">
        <id>Q0VD86</id>
        <label>INCA1</label>
    </interactant>
    <organismsDiffer>false</organismsDiffer>
    <experiments>3</experiments>
</comment>
<comment type="interaction">
    <interactant intactId="EBI-10297093">
        <id>Q9BRQ3</id>
    </interactant>
    <interactant intactId="EBI-724915">
        <id>Q53HC5</id>
        <label>KLHL26</label>
    </interactant>
    <organismsDiffer>false</organismsDiffer>
    <experiments>3</experiments>
</comment>
<comment type="interaction">
    <interactant intactId="EBI-10297093">
        <id>Q9BRQ3</id>
    </interactant>
    <interactant intactId="EBI-12039345">
        <id>Q9UBR4-2</id>
        <label>LHX3</label>
    </interactant>
    <organismsDiffer>false</organismsDiffer>
    <experiments>3</experiments>
</comment>
<comment type="interaction">
    <interactant intactId="EBI-10297093">
        <id>Q9BRQ3</id>
    </interactant>
    <interactant intactId="EBI-6257312">
        <id>Q9BVN2</id>
        <label>RUSC1</label>
    </interactant>
    <organismsDiffer>false</organismsDiffer>
    <experiments>4</experiments>
</comment>
<comment type="interaction">
    <interactant intactId="EBI-10297093">
        <id>Q9BRQ3</id>
    </interactant>
    <interactant intactId="EBI-3957636">
        <id>Q8IYX7</id>
        <label>SAXO1</label>
    </interactant>
    <organismsDiffer>false</organismsDiffer>
    <experiments>3</experiments>
</comment>
<comment type="interaction">
    <interactant intactId="EBI-10297093">
        <id>Q9BRQ3</id>
    </interactant>
    <interactant intactId="EBI-13636688">
        <id>P15884-3</id>
        <label>TCF4</label>
    </interactant>
    <organismsDiffer>false</organismsDiffer>
    <experiments>3</experiments>
</comment>
<comment type="interaction">
    <interactant intactId="EBI-10297093">
        <id>Q9BRQ3</id>
    </interactant>
    <interactant intactId="EBI-717810">
        <id>Q08117</id>
        <label>TLE5</label>
    </interactant>
    <organismsDiffer>false</organismsDiffer>
    <experiments>4</experiments>
</comment>
<comment type="interaction">
    <interactant intactId="EBI-10297093">
        <id>Q9BRQ3</id>
    </interactant>
    <interactant intactId="EBI-11741437">
        <id>Q08117-2</id>
        <label>TLE5</label>
    </interactant>
    <organismsDiffer>false</organismsDiffer>
    <experiments>3</experiments>
</comment>
<comment type="interaction">
    <interactant intactId="EBI-10297093">
        <id>Q9BRQ3</id>
    </interactant>
    <interactant intactId="EBI-11975223">
        <id>Q70EL1-9</id>
        <label>USP54</label>
    </interactant>
    <organismsDiffer>false</organismsDiffer>
    <experiments>3</experiments>
</comment>
<comment type="interaction">
    <interactant intactId="EBI-10297093">
        <id>Q9BRQ3</id>
    </interactant>
    <interactant intactId="EBI-23279779">
        <id>Q9H977-4</id>
        <label>WDR54</label>
    </interactant>
    <organismsDiffer>false</organismsDiffer>
    <experiments>5</experiments>
</comment>
<comment type="interaction">
    <interactant intactId="EBI-10297093">
        <id>Q9BRQ3</id>
    </interactant>
    <interactant intactId="EBI-2515625">
        <id>Q86T24</id>
        <label>ZBTB33</label>
    </interactant>
    <organismsDiffer>false</organismsDiffer>
    <experiments>3</experiments>
</comment>
<comment type="interaction">
    <interactant intactId="EBI-10297093">
        <id>Q9BRQ3</id>
    </interactant>
    <interactant intactId="EBI-12030590">
        <id>Q9H0C1</id>
        <label>ZMYND12</label>
    </interactant>
    <organismsDiffer>false</organismsDiffer>
    <experiments>5</experiments>
</comment>
<comment type="interaction">
    <interactant intactId="EBI-10297093">
        <id>Q9BRQ3</id>
    </interactant>
    <interactant intactId="EBI-2849334">
        <id>P52747</id>
        <label>ZNF143</label>
    </interactant>
    <organismsDiffer>false</organismsDiffer>
    <experiments>3</experiments>
</comment>
<comment type="interaction">
    <interactant intactId="EBI-10297093">
        <id>Q9BRQ3</id>
    </interactant>
    <interactant intactId="EBI-12884200">
        <id>P17023</id>
        <label>ZNF19</label>
    </interactant>
    <organismsDiffer>false</organismsDiffer>
    <experiments>3</experiments>
</comment>
<comment type="interaction">
    <interactant intactId="EBI-10297093">
        <id>Q9BRQ3</id>
    </interactant>
    <interactant intactId="EBI-10252492">
        <id>Q6P1L6</id>
        <label>ZNF343</label>
    </interactant>
    <organismsDiffer>false</organismsDiffer>
    <experiments>3</experiments>
</comment>
<comment type="interaction">
    <interactant intactId="EBI-10297093">
        <id>Q9BRQ3</id>
    </interactant>
    <interactant intactId="EBI-8643207">
        <id>Q8TD17</id>
        <label>ZNF398</label>
    </interactant>
    <organismsDiffer>false</organismsDiffer>
    <experiments>3</experiments>
</comment>
<comment type="interaction">
    <interactant intactId="EBI-10297093">
        <id>Q9BRQ3</id>
    </interactant>
    <interactant intactId="EBI-745520">
        <id>Q9P0T4</id>
        <label>ZNF581</label>
    </interactant>
    <organismsDiffer>false</organismsDiffer>
    <experiments>3</experiments>
</comment>
<comment type="interaction">
    <interactant intactId="EBI-10297093">
        <id>Q9BRQ3</id>
    </interactant>
    <interactant intactId="EBI-11985915">
        <id>Q5T619</id>
        <label>ZNF648</label>
    </interactant>
    <organismsDiffer>false</organismsDiffer>
    <experiments>3</experiments>
</comment>
<comment type="interaction">
    <interactant intactId="EBI-10297093">
        <id>Q9BRQ3</id>
    </interactant>
    <interactant intactId="EBI-625509">
        <id>Q8N720</id>
        <label>ZNF655</label>
    </interactant>
    <organismsDiffer>false</organismsDiffer>
    <experiments>3</experiments>
</comment>
<comment type="alternative products">
    <event type="alternative splicing"/>
    <isoform>
        <id>Q9BRQ3-1</id>
        <name>1</name>
        <sequence type="displayed"/>
    </isoform>
    <isoform>
        <id>Q9BRQ3-2</id>
        <name>2</name>
        <sequence type="described" ref="VSP_021884"/>
    </isoform>
    <isoform>
        <id>Q9BRQ3-3</id>
        <name>3</name>
        <sequence type="described" ref="VSP_053790"/>
    </isoform>
</comment>
<comment type="similarity">
    <text evidence="6">Belongs to the Nudix hydrolase family.</text>
</comment>
<reference key="1">
    <citation type="journal article" date="2004" name="Proc. Natl. Acad. Sci. U.S.A.">
        <title>Large-scale cDNA transfection screening for genes related to cancer development and progression.</title>
        <authorList>
            <person name="Wan D."/>
            <person name="Gong Y."/>
            <person name="Qin W."/>
            <person name="Zhang P."/>
            <person name="Li J."/>
            <person name="Wei L."/>
            <person name="Zhou X."/>
            <person name="Li H."/>
            <person name="Qiu X."/>
            <person name="Zhong F."/>
            <person name="He L."/>
            <person name="Yu J."/>
            <person name="Yao G."/>
            <person name="Jiang H."/>
            <person name="Qian L."/>
            <person name="Yu Y."/>
            <person name="Shu H."/>
            <person name="Chen X."/>
            <person name="Xu H."/>
            <person name="Guo M."/>
            <person name="Pan Z."/>
            <person name="Chen Y."/>
            <person name="Ge C."/>
            <person name="Yang S."/>
            <person name="Gu J."/>
        </authorList>
    </citation>
    <scope>NUCLEOTIDE SEQUENCE [LARGE SCALE MRNA] (ISOFORM 2)</scope>
</reference>
<reference key="2">
    <citation type="journal article" date="2006" name="Nature">
        <title>Human chromosome 11 DNA sequence and analysis including novel gene identification.</title>
        <authorList>
            <person name="Taylor T.D."/>
            <person name="Noguchi H."/>
            <person name="Totoki Y."/>
            <person name="Toyoda A."/>
            <person name="Kuroki Y."/>
            <person name="Dewar K."/>
            <person name="Lloyd C."/>
            <person name="Itoh T."/>
            <person name="Takeda T."/>
            <person name="Kim D.-W."/>
            <person name="She X."/>
            <person name="Barlow K.F."/>
            <person name="Bloom T."/>
            <person name="Bruford E."/>
            <person name="Chang J.L."/>
            <person name="Cuomo C.A."/>
            <person name="Eichler E."/>
            <person name="FitzGerald M.G."/>
            <person name="Jaffe D.B."/>
            <person name="LaButti K."/>
            <person name="Nicol R."/>
            <person name="Park H.-S."/>
            <person name="Seaman C."/>
            <person name="Sougnez C."/>
            <person name="Yang X."/>
            <person name="Zimmer A.R."/>
            <person name="Zody M.C."/>
            <person name="Birren B.W."/>
            <person name="Nusbaum C."/>
            <person name="Fujiyama A."/>
            <person name="Hattori M."/>
            <person name="Rogers J."/>
            <person name="Lander E.S."/>
            <person name="Sakaki Y."/>
        </authorList>
    </citation>
    <scope>NUCLEOTIDE SEQUENCE [LARGE SCALE GENOMIC DNA]</scope>
</reference>
<reference key="3">
    <citation type="journal article" date="2004" name="Genome Res.">
        <title>The status, quality, and expansion of the NIH full-length cDNA project: the Mammalian Gene Collection (MGC).</title>
        <authorList>
            <consortium name="The MGC Project Team"/>
        </authorList>
    </citation>
    <scope>NUCLEOTIDE SEQUENCE [LARGE SCALE MRNA] (ISOFORM 1)</scope>
    <scope>VARIANTS ARG-260 AND PRO-263</scope>
    <source>
        <tissue>Uterus</tissue>
    </source>
</reference>
<reference evidence="8" key="4">
    <citation type="submission" date="2016-06" db="PDB data bank">
        <title>Crystal structure of human NUDT22.</title>
        <authorList>
            <consortium name="Structural genomics consortium (SGC)"/>
        </authorList>
    </citation>
    <scope>X-RAY CRYSTALLOGRAPHY (1.45 ANGSTROMS)</scope>
</reference>
<reference evidence="9 10" key="5">
    <citation type="journal article" date="2018" name="Structure">
        <title>Human NUDT22 is a UDP-glucose/galactose hydrolase exhibiting a unique structural fold.</title>
        <authorList>
            <person name="Carter M."/>
            <person name="Jemth A.S."/>
            <person name="Carreras-Puigvert J."/>
            <person name="Herr P."/>
            <person name="Martinez Carranza M."/>
            <person name="Vallin K.S.A."/>
            <person name="Throup A."/>
            <person name="Helleday T."/>
            <person name="Stenmark P."/>
        </authorList>
    </citation>
    <scope>X-RAY CRYSTALLOGRAPHY (1.80 ANGSTROMS) IN COMPLEX WITH UDP-GLUCOSE AND MAGNESIUM IONS</scope>
    <scope>BIOPHYSICOCHEMICAL PROPERTIES</scope>
    <scope>FUNCTION</scope>
    <scope>CATALYTIC ACTIVITY</scope>
    <scope>COFACTOR</scope>
    <scope>MOTIF NUDIX BOX</scope>
    <scope>MUTAGENESIS OF HIS-156; GLU-189 AND GLU-193</scope>
</reference>
<feature type="chain" id="PRO_0000263731" description="Uridine diphosphate glucose pyrophosphatase NUDT22">
    <location>
        <begin position="1"/>
        <end position="303"/>
    </location>
</feature>
<feature type="domain" description="Nudix hydrolase" evidence="1">
    <location>
        <begin position="118"/>
        <end position="285"/>
    </location>
</feature>
<feature type="region of interest" description="Disordered" evidence="2">
    <location>
        <begin position="148"/>
        <end position="168"/>
    </location>
</feature>
<feature type="short sequence motif" description="Nudix box" evidence="7">
    <location>
        <begin position="175"/>
        <end position="196"/>
    </location>
</feature>
<feature type="binding site" evidence="9">
    <location>
        <position position="56"/>
    </location>
    <ligand>
        <name>substrate</name>
    </ligand>
</feature>
<feature type="binding site" evidence="9">
    <location>
        <position position="87"/>
    </location>
    <ligand>
        <name>substrate</name>
    </ligand>
</feature>
<feature type="binding site" evidence="9">
    <location>
        <position position="139"/>
    </location>
    <ligand>
        <name>substrate</name>
    </ligand>
</feature>
<feature type="binding site" evidence="9">
    <location>
        <position position="144"/>
    </location>
    <ligand>
        <name>substrate</name>
    </ligand>
</feature>
<feature type="binding site" evidence="9">
    <location>
        <position position="151"/>
    </location>
    <ligand>
        <name>substrate</name>
    </ligand>
</feature>
<feature type="binding site" evidence="9">
    <location>
        <position position="156"/>
    </location>
    <ligand>
        <name>substrate</name>
    </ligand>
</feature>
<feature type="binding site" evidence="9">
    <location>
        <position position="158"/>
    </location>
    <ligand>
        <name>substrate</name>
    </ligand>
</feature>
<feature type="binding site" evidence="7">
    <location>
        <position position="189"/>
    </location>
    <ligand>
        <name>Mg(2+)</name>
        <dbReference type="ChEBI" id="CHEBI:18420"/>
    </ligand>
</feature>
<feature type="binding site" evidence="7">
    <location>
        <position position="193"/>
    </location>
    <ligand>
        <name>Mg(2+)</name>
        <dbReference type="ChEBI" id="CHEBI:18420"/>
    </ligand>
</feature>
<feature type="binding site" evidence="9">
    <location>
        <position position="274"/>
    </location>
    <ligand>
        <name>substrate</name>
    </ligand>
</feature>
<feature type="splice variant" id="VSP_053790" description="In isoform 3." evidence="6">
    <original>QALCPGGSPQHQDLAGQLVVHELFSSVLQEICDE</original>
    <variation>Q</variation>
    <location>
        <begin position="160"/>
        <end position="193"/>
    </location>
</feature>
<feature type="splice variant" id="VSP_021884" description="In isoform 2." evidence="5">
    <original>ALCPGGSPQHQDLAGQLVVHELFSSVLQEICDEVNLPLLTLSQPLLLGIARNETSAGRASAEFYVQCSLTSEQVRKHYLSGGPEAHESTGIFFVETQNVQRLLETEMWAELCPSAKGAIILYNRVQGSPTGAALGSPALLPPL</original>
    <variation>VRFQAGHKDPDSSRELQLSTLPILPALVSPSLKGKLAWYFSGSLLRAVHLPPH</variation>
    <location>
        <begin position="161"/>
        <end position="303"/>
    </location>
</feature>
<feature type="sequence variant" id="VAR_029616" description="In dbSNP:rs2286612.">
    <original>G</original>
    <variation>C</variation>
    <location>
        <position position="36"/>
    </location>
</feature>
<feature type="sequence variant" id="VAR_050414" description="In dbSNP:rs34448455.">
    <original>T</original>
    <variation>R</variation>
    <location>
        <position position="129"/>
    </location>
</feature>
<feature type="sequence variant" id="VAR_029617" description="In dbSNP:rs633561." evidence="3">
    <original>Q</original>
    <variation>R</variation>
    <location>
        <position position="260"/>
    </location>
</feature>
<feature type="sequence variant" id="VAR_029618" description="In dbSNP:rs633557." evidence="3">
    <original>L</original>
    <variation>P</variation>
    <location>
        <position position="263"/>
    </location>
</feature>
<feature type="mutagenesis site" description="Abolishes enzyme activity with UDP-galactose." evidence="4">
    <original>H</original>
    <variation>A</variation>
    <location>
        <position position="156"/>
    </location>
</feature>
<feature type="mutagenesis site" description="Abolishes enzyme activity with UDP-galactose." evidence="4">
    <original>E</original>
    <variation>A</variation>
    <location>
        <position position="189"/>
    </location>
</feature>
<feature type="mutagenesis site" description="Abolishes enzyme activity with UDP-galactose." evidence="4">
    <original>E</original>
    <variation>A</variation>
    <location>
        <position position="193"/>
    </location>
</feature>
<feature type="sequence conflict" description="In Ref. 1; AAQ15238." evidence="6" ref="1">
    <original>L</original>
    <variation>V</variation>
    <location>
        <position position="9"/>
    </location>
</feature>
<feature type="strand" evidence="14">
    <location>
        <begin position="5"/>
        <end position="10"/>
    </location>
</feature>
<feature type="helix" evidence="14">
    <location>
        <begin position="18"/>
        <end position="20"/>
    </location>
</feature>
<feature type="strand" evidence="14">
    <location>
        <begin position="21"/>
        <end position="25"/>
    </location>
</feature>
<feature type="helix" evidence="14">
    <location>
        <begin position="27"/>
        <end position="29"/>
    </location>
</feature>
<feature type="helix" evidence="14">
    <location>
        <begin position="39"/>
        <end position="51"/>
    </location>
</feature>
<feature type="strand" evidence="14">
    <location>
        <begin position="59"/>
        <end position="68"/>
    </location>
</feature>
<feature type="strand" evidence="14">
    <location>
        <begin position="78"/>
        <end position="86"/>
    </location>
</feature>
<feature type="helix" evidence="14">
    <location>
        <begin position="87"/>
        <end position="92"/>
    </location>
</feature>
<feature type="turn" evidence="14">
    <location>
        <begin position="93"/>
        <end position="95"/>
    </location>
</feature>
<feature type="helix" evidence="14">
    <location>
        <begin position="99"/>
        <end position="110"/>
    </location>
</feature>
<feature type="turn" evidence="14">
    <location>
        <begin position="113"/>
        <end position="116"/>
    </location>
</feature>
<feature type="strand" evidence="14">
    <location>
        <begin position="122"/>
        <end position="128"/>
    </location>
</feature>
<feature type="strand" evidence="14">
    <location>
        <begin position="132"/>
        <end position="138"/>
    </location>
</feature>
<feature type="strand" evidence="14">
    <location>
        <begin position="143"/>
        <end position="146"/>
    </location>
</feature>
<feature type="strand" evidence="14">
    <location>
        <begin position="153"/>
        <end position="155"/>
    </location>
</feature>
<feature type="helix" evidence="12">
    <location>
        <begin position="159"/>
        <end position="161"/>
    </location>
</feature>
<feature type="strand" evidence="13">
    <location>
        <begin position="165"/>
        <end position="167"/>
    </location>
</feature>
<feature type="turn" evidence="11">
    <location>
        <begin position="171"/>
        <end position="173"/>
    </location>
</feature>
<feature type="helix" evidence="14">
    <location>
        <begin position="175"/>
        <end position="194"/>
    </location>
</feature>
<feature type="helix" evidence="14">
    <location>
        <begin position="198"/>
        <end position="200"/>
    </location>
</feature>
<feature type="strand" evidence="14">
    <location>
        <begin position="205"/>
        <end position="212"/>
    </location>
</feature>
<feature type="helix" evidence="14">
    <location>
        <begin position="213"/>
        <end position="215"/>
    </location>
</feature>
<feature type="strand" evidence="14">
    <location>
        <begin position="219"/>
        <end position="229"/>
    </location>
</feature>
<feature type="helix" evidence="14">
    <location>
        <begin position="231"/>
        <end position="239"/>
    </location>
</feature>
<feature type="helix" evidence="14">
    <location>
        <begin position="243"/>
        <end position="245"/>
    </location>
</feature>
<feature type="strand" evidence="14">
    <location>
        <begin position="247"/>
        <end position="255"/>
    </location>
</feature>
<feature type="helix" evidence="14">
    <location>
        <begin position="256"/>
        <end position="259"/>
    </location>
</feature>
<feature type="helix" evidence="14">
    <location>
        <begin position="260"/>
        <end position="264"/>
    </location>
</feature>
<feature type="helix" evidence="14">
    <location>
        <begin position="268"/>
        <end position="270"/>
    </location>
</feature>
<feature type="helix" evidence="14">
    <location>
        <begin position="273"/>
        <end position="285"/>
    </location>
</feature>
<feature type="turn" evidence="14">
    <location>
        <begin position="292"/>
        <end position="295"/>
    </location>
</feature>
<feature type="turn" evidence="14">
    <location>
        <begin position="297"/>
        <end position="299"/>
    </location>
</feature>
<sequence>MDPEVTLLLQCPGGGLPQEQIQAELSPAHDRRPLPGGDEAITAIWETRLKAQPWLFDAPKFRLHSATLAPIGSRGPQLLLRLGLTSYRDFLGTNWSSSAAWLRQQGATDWGDTQAYLADPLGVGAALATADDFLVFLRRSRQVAEAPGLVDVPGGHPEPQALCPGGSPQHQDLAGQLVVHELFSSVLQEICDEVNLPLLTLSQPLLLGIARNETSAGRASAEFYVQCSLTSEQVRKHYLSGGPEAHESTGIFFVETQNVQRLLETEMWAELCPSAKGAIILYNRVQGSPTGAALGSPALLPPL</sequence>
<proteinExistence type="evidence at protein level"/>
<gene>
    <name type="primary">NUDT22</name>
    <name type="ORF">PP11246</name>
</gene>
<evidence type="ECO:0000255" key="1">
    <source>
        <dbReference type="PROSITE-ProRule" id="PRU00794"/>
    </source>
</evidence>
<evidence type="ECO:0000256" key="2">
    <source>
        <dbReference type="SAM" id="MobiDB-lite"/>
    </source>
</evidence>
<evidence type="ECO:0000269" key="3">
    <source>
    </source>
</evidence>
<evidence type="ECO:0000269" key="4">
    <source>
    </source>
</evidence>
<evidence type="ECO:0000303" key="5">
    <source>
    </source>
</evidence>
<evidence type="ECO:0000305" key="6"/>
<evidence type="ECO:0000305" key="7">
    <source>
    </source>
</evidence>
<evidence type="ECO:0007744" key="8">
    <source>
        <dbReference type="PDB" id="5LF9"/>
    </source>
</evidence>
<evidence type="ECO:0007744" key="9">
    <source>
        <dbReference type="PDB" id="5LOR"/>
    </source>
</evidence>
<evidence type="ECO:0007744" key="10">
    <source>
        <dbReference type="PDB" id="5LOU"/>
    </source>
</evidence>
<evidence type="ECO:0007829" key="11">
    <source>
        <dbReference type="PDB" id="5LF9"/>
    </source>
</evidence>
<evidence type="ECO:0007829" key="12">
    <source>
        <dbReference type="PDB" id="5LOR"/>
    </source>
</evidence>
<evidence type="ECO:0007829" key="13">
    <source>
        <dbReference type="PDB" id="5LOU"/>
    </source>
</evidence>
<evidence type="ECO:0007829" key="14">
    <source>
        <dbReference type="PDB" id="5RKZ"/>
    </source>
</evidence>
<protein>
    <recommendedName>
        <fullName>Uridine diphosphate glucose pyrophosphatase NUDT22</fullName>
        <shortName>UDPG pyrophosphatase</shortName>
        <shortName>UGPPase</shortName>
        <ecNumber>3.6.1.45</ecNumber>
    </recommendedName>
    <alternativeName>
        <fullName>Nucleoside diphosphate-linked moiety X motif 22</fullName>
        <shortName>Nudix motif 22</shortName>
    </alternativeName>
</protein>
<keyword id="KW-0002">3D-structure</keyword>
<keyword id="KW-0025">Alternative splicing</keyword>
<keyword id="KW-0378">Hydrolase</keyword>
<keyword id="KW-0460">Magnesium</keyword>
<keyword id="KW-0479">Metal-binding</keyword>
<keyword id="KW-1267">Proteomics identification</keyword>
<keyword id="KW-1185">Reference proteome</keyword>
<organism>
    <name type="scientific">Homo sapiens</name>
    <name type="common">Human</name>
    <dbReference type="NCBI Taxonomy" id="9606"/>
    <lineage>
        <taxon>Eukaryota</taxon>
        <taxon>Metazoa</taxon>
        <taxon>Chordata</taxon>
        <taxon>Craniata</taxon>
        <taxon>Vertebrata</taxon>
        <taxon>Euteleostomi</taxon>
        <taxon>Mammalia</taxon>
        <taxon>Eutheria</taxon>
        <taxon>Euarchontoglires</taxon>
        <taxon>Primates</taxon>
        <taxon>Haplorrhini</taxon>
        <taxon>Catarrhini</taxon>
        <taxon>Hominidae</taxon>
        <taxon>Homo</taxon>
    </lineage>
</organism>